<protein>
    <recommendedName>
        <fullName evidence="1">Queuine tRNA-ribosyltransferase</fullName>
        <ecNumber evidence="1">2.4.2.29</ecNumber>
    </recommendedName>
    <alternativeName>
        <fullName evidence="1">Guanine insertion enzyme</fullName>
    </alternativeName>
    <alternativeName>
        <fullName evidence="1">tRNA-guanine transglycosylase</fullName>
    </alternativeName>
</protein>
<organism>
    <name type="scientific">Nitrosospira multiformis (strain ATCC 25196 / NCIMB 11849 / C 71)</name>
    <dbReference type="NCBI Taxonomy" id="323848"/>
    <lineage>
        <taxon>Bacteria</taxon>
        <taxon>Pseudomonadati</taxon>
        <taxon>Pseudomonadota</taxon>
        <taxon>Betaproteobacteria</taxon>
        <taxon>Nitrosomonadales</taxon>
        <taxon>Nitrosomonadaceae</taxon>
        <taxon>Nitrosospira</taxon>
    </lineage>
</organism>
<keyword id="KW-0328">Glycosyltransferase</keyword>
<keyword id="KW-0479">Metal-binding</keyword>
<keyword id="KW-0671">Queuosine biosynthesis</keyword>
<keyword id="KW-1185">Reference proteome</keyword>
<keyword id="KW-0808">Transferase</keyword>
<keyword id="KW-0819">tRNA processing</keyword>
<keyword id="KW-0862">Zinc</keyword>
<sequence length="367" mass="40876">MKFQLHRTDGLARRGTLSLTHGVVETPAFMPVGTYGAVKTMSPADLQVINAHIVLGNTFHLWLRPGLQVIEAHGGLHRFMGWDGPILTDSGGFQVFSLGVLRKITEQGVKFKSPVNGDTCFLTPEESMRIQYVLNSDIVMIFDECTPYPADERAVGESMELSLRWAERSRQAHDEGGNRNGLFGIVQGGMYEKLRDESLAGLLDIGFDGYAIGGLSVGEPKADMRRILRHTAPGLPAGKPRYLMGVGTPADIVDAVAQGMDMFDCVLPTRNARNGWLYTRTGVIKLRNSQYRLDTRPADEQCTCYTCRHFSRAYLHHLQRTGEILGARLNTLHNLYYYQQLMGEIRTAIENGQFQEYAQAFQAQTAS</sequence>
<name>TGT_NITMU</name>
<proteinExistence type="inferred from homology"/>
<gene>
    <name evidence="1" type="primary">tgt</name>
    <name type="ordered locus">Nmul_A2429</name>
</gene>
<comment type="function">
    <text evidence="1">Catalyzes the base-exchange of a guanine (G) residue with the queuine precursor 7-aminomethyl-7-deazaguanine (PreQ1) at position 34 (anticodon wobble position) in tRNAs with GU(N) anticodons (tRNA-Asp, -Asn, -His and -Tyr). Catalysis occurs through a double-displacement mechanism. The nucleophile active site attacks the C1' of nucleotide 34 to detach the guanine base from the RNA, forming a covalent enzyme-RNA intermediate. The proton acceptor active site deprotonates the incoming PreQ1, allowing a nucleophilic attack on the C1' of the ribose to form the product. After dissociation, two additional enzymatic reactions on the tRNA convert PreQ1 to queuine (Q), resulting in the hypermodified nucleoside queuosine (7-(((4,5-cis-dihydroxy-2-cyclopenten-1-yl)amino)methyl)-7-deazaguanosine).</text>
</comment>
<comment type="catalytic activity">
    <reaction evidence="1">
        <text>7-aminomethyl-7-carbaguanine + guanosine(34) in tRNA = 7-aminomethyl-7-carbaguanosine(34) in tRNA + guanine</text>
        <dbReference type="Rhea" id="RHEA:24104"/>
        <dbReference type="Rhea" id="RHEA-COMP:10341"/>
        <dbReference type="Rhea" id="RHEA-COMP:10342"/>
        <dbReference type="ChEBI" id="CHEBI:16235"/>
        <dbReference type="ChEBI" id="CHEBI:58703"/>
        <dbReference type="ChEBI" id="CHEBI:74269"/>
        <dbReference type="ChEBI" id="CHEBI:82833"/>
        <dbReference type="EC" id="2.4.2.29"/>
    </reaction>
</comment>
<comment type="cofactor">
    <cofactor evidence="1">
        <name>Zn(2+)</name>
        <dbReference type="ChEBI" id="CHEBI:29105"/>
    </cofactor>
    <text evidence="1">Binds 1 zinc ion per subunit.</text>
</comment>
<comment type="pathway">
    <text evidence="1">tRNA modification; tRNA-queuosine biosynthesis.</text>
</comment>
<comment type="subunit">
    <text evidence="1">Homodimer. Within each dimer, one monomer is responsible for RNA recognition and catalysis, while the other monomer binds to the replacement base PreQ1.</text>
</comment>
<comment type="similarity">
    <text evidence="1">Belongs to the queuine tRNA-ribosyltransferase family.</text>
</comment>
<accession>Q2Y6A3</accession>
<evidence type="ECO:0000255" key="1">
    <source>
        <dbReference type="HAMAP-Rule" id="MF_00168"/>
    </source>
</evidence>
<feature type="chain" id="PRO_1000016819" description="Queuine tRNA-ribosyltransferase">
    <location>
        <begin position="1"/>
        <end position="367"/>
    </location>
</feature>
<feature type="region of interest" description="RNA binding" evidence="1">
    <location>
        <begin position="245"/>
        <end position="251"/>
    </location>
</feature>
<feature type="region of interest" description="RNA binding; important for wobble base 34 recognition" evidence="1">
    <location>
        <begin position="269"/>
        <end position="273"/>
    </location>
</feature>
<feature type="active site" description="Proton acceptor" evidence="1">
    <location>
        <position position="89"/>
    </location>
</feature>
<feature type="active site" description="Nucleophile" evidence="1">
    <location>
        <position position="264"/>
    </location>
</feature>
<feature type="binding site" evidence="1">
    <location>
        <begin position="89"/>
        <end position="93"/>
    </location>
    <ligand>
        <name>substrate</name>
    </ligand>
</feature>
<feature type="binding site" evidence="1">
    <location>
        <position position="143"/>
    </location>
    <ligand>
        <name>substrate</name>
    </ligand>
</feature>
<feature type="binding site" evidence="1">
    <location>
        <position position="187"/>
    </location>
    <ligand>
        <name>substrate</name>
    </ligand>
</feature>
<feature type="binding site" evidence="1">
    <location>
        <position position="214"/>
    </location>
    <ligand>
        <name>substrate</name>
    </ligand>
</feature>
<feature type="binding site" evidence="1">
    <location>
        <position position="302"/>
    </location>
    <ligand>
        <name>Zn(2+)</name>
        <dbReference type="ChEBI" id="CHEBI:29105"/>
    </ligand>
</feature>
<feature type="binding site" evidence="1">
    <location>
        <position position="304"/>
    </location>
    <ligand>
        <name>Zn(2+)</name>
        <dbReference type="ChEBI" id="CHEBI:29105"/>
    </ligand>
</feature>
<feature type="binding site" evidence="1">
    <location>
        <position position="307"/>
    </location>
    <ligand>
        <name>Zn(2+)</name>
        <dbReference type="ChEBI" id="CHEBI:29105"/>
    </ligand>
</feature>
<feature type="binding site" evidence="1">
    <location>
        <position position="333"/>
    </location>
    <ligand>
        <name>Zn(2+)</name>
        <dbReference type="ChEBI" id="CHEBI:29105"/>
    </ligand>
</feature>
<reference key="1">
    <citation type="submission" date="2005-08" db="EMBL/GenBank/DDBJ databases">
        <title>Complete sequence of chromosome 1 of Nitrosospira multiformis ATCC 25196.</title>
        <authorList>
            <person name="Copeland A."/>
            <person name="Lucas S."/>
            <person name="Lapidus A."/>
            <person name="Barry K."/>
            <person name="Detter J.C."/>
            <person name="Glavina T."/>
            <person name="Hammon N."/>
            <person name="Israni S."/>
            <person name="Pitluck S."/>
            <person name="Chain P."/>
            <person name="Malfatti S."/>
            <person name="Shin M."/>
            <person name="Vergez L."/>
            <person name="Schmutz J."/>
            <person name="Larimer F."/>
            <person name="Land M."/>
            <person name="Hauser L."/>
            <person name="Kyrpides N."/>
            <person name="Lykidis A."/>
            <person name="Richardson P."/>
        </authorList>
    </citation>
    <scope>NUCLEOTIDE SEQUENCE [LARGE SCALE GENOMIC DNA]</scope>
    <source>
        <strain>ATCC 25196 / NCIMB 11849 / C 71</strain>
    </source>
</reference>
<dbReference type="EC" id="2.4.2.29" evidence="1"/>
<dbReference type="EMBL" id="CP000103">
    <property type="protein sequence ID" value="ABB75718.1"/>
    <property type="molecule type" value="Genomic_DNA"/>
</dbReference>
<dbReference type="RefSeq" id="WP_011381719.1">
    <property type="nucleotide sequence ID" value="NC_007614.1"/>
</dbReference>
<dbReference type="SMR" id="Q2Y6A3"/>
<dbReference type="STRING" id="323848.Nmul_A2429"/>
<dbReference type="KEGG" id="nmu:Nmul_A2429"/>
<dbReference type="eggNOG" id="COG0343">
    <property type="taxonomic scope" value="Bacteria"/>
</dbReference>
<dbReference type="HOGENOM" id="CLU_022060_0_1_4"/>
<dbReference type="OrthoDB" id="9805417at2"/>
<dbReference type="UniPathway" id="UPA00392"/>
<dbReference type="Proteomes" id="UP000002718">
    <property type="component" value="Chromosome"/>
</dbReference>
<dbReference type="GO" id="GO:0005829">
    <property type="term" value="C:cytosol"/>
    <property type="evidence" value="ECO:0007669"/>
    <property type="project" value="TreeGrafter"/>
</dbReference>
<dbReference type="GO" id="GO:0046872">
    <property type="term" value="F:metal ion binding"/>
    <property type="evidence" value="ECO:0007669"/>
    <property type="project" value="UniProtKB-KW"/>
</dbReference>
<dbReference type="GO" id="GO:0008479">
    <property type="term" value="F:tRNA-guanosine(34) queuine transglycosylase activity"/>
    <property type="evidence" value="ECO:0007669"/>
    <property type="project" value="UniProtKB-UniRule"/>
</dbReference>
<dbReference type="GO" id="GO:0008616">
    <property type="term" value="P:queuosine biosynthetic process"/>
    <property type="evidence" value="ECO:0007669"/>
    <property type="project" value="UniProtKB-UniRule"/>
</dbReference>
<dbReference type="GO" id="GO:0002099">
    <property type="term" value="P:tRNA wobble guanine modification"/>
    <property type="evidence" value="ECO:0007669"/>
    <property type="project" value="TreeGrafter"/>
</dbReference>
<dbReference type="GO" id="GO:0101030">
    <property type="term" value="P:tRNA-guanine transglycosylation"/>
    <property type="evidence" value="ECO:0007669"/>
    <property type="project" value="InterPro"/>
</dbReference>
<dbReference type="FunFam" id="3.20.20.105:FF:000001">
    <property type="entry name" value="Queuine tRNA-ribosyltransferase"/>
    <property type="match status" value="1"/>
</dbReference>
<dbReference type="Gene3D" id="3.20.20.105">
    <property type="entry name" value="Queuine tRNA-ribosyltransferase-like"/>
    <property type="match status" value="1"/>
</dbReference>
<dbReference type="HAMAP" id="MF_00168">
    <property type="entry name" value="Q_tRNA_Tgt"/>
    <property type="match status" value="1"/>
</dbReference>
<dbReference type="InterPro" id="IPR050076">
    <property type="entry name" value="ArchSynthase1/Queuine_TRR"/>
</dbReference>
<dbReference type="InterPro" id="IPR004803">
    <property type="entry name" value="TGT"/>
</dbReference>
<dbReference type="InterPro" id="IPR036511">
    <property type="entry name" value="TGT-like_sf"/>
</dbReference>
<dbReference type="InterPro" id="IPR002616">
    <property type="entry name" value="tRNA_ribo_trans-like"/>
</dbReference>
<dbReference type="NCBIfam" id="TIGR00430">
    <property type="entry name" value="Q_tRNA_tgt"/>
    <property type="match status" value="1"/>
</dbReference>
<dbReference type="NCBIfam" id="TIGR00449">
    <property type="entry name" value="tgt_general"/>
    <property type="match status" value="1"/>
</dbReference>
<dbReference type="PANTHER" id="PTHR46499">
    <property type="entry name" value="QUEUINE TRNA-RIBOSYLTRANSFERASE"/>
    <property type="match status" value="1"/>
</dbReference>
<dbReference type="PANTHER" id="PTHR46499:SF1">
    <property type="entry name" value="QUEUINE TRNA-RIBOSYLTRANSFERASE"/>
    <property type="match status" value="1"/>
</dbReference>
<dbReference type="Pfam" id="PF01702">
    <property type="entry name" value="TGT"/>
    <property type="match status" value="1"/>
</dbReference>
<dbReference type="SUPFAM" id="SSF51713">
    <property type="entry name" value="tRNA-guanine transglycosylase"/>
    <property type="match status" value="1"/>
</dbReference>